<sequence length="61" mass="6173">MDPNCSCATRDSCACASSCKCKECKCTSCKKSCCSCCPAGCTKCAQGCICKGASDKCSCCA</sequence>
<organism>
    <name type="scientific">Oryctolagus cuniculus</name>
    <name type="common">Rabbit</name>
    <dbReference type="NCBI Taxonomy" id="9986"/>
    <lineage>
        <taxon>Eukaryota</taxon>
        <taxon>Metazoa</taxon>
        <taxon>Chordata</taxon>
        <taxon>Craniata</taxon>
        <taxon>Vertebrata</taxon>
        <taxon>Euteleostomi</taxon>
        <taxon>Mammalia</taxon>
        <taxon>Eutheria</taxon>
        <taxon>Euarchontoglires</taxon>
        <taxon>Glires</taxon>
        <taxon>Lagomorpha</taxon>
        <taxon>Leporidae</taxon>
        <taxon>Oryctolagus</taxon>
    </lineage>
</organism>
<keyword id="KW-0007">Acetylation</keyword>
<keyword id="KW-0104">Cadmium</keyword>
<keyword id="KW-0186">Copper</keyword>
<keyword id="KW-0903">Direct protein sequencing</keyword>
<keyword id="KW-0479">Metal-binding</keyword>
<keyword id="KW-0480">Metal-thiolate cluster</keyword>
<keyword id="KW-1185">Reference proteome</keyword>
<keyword id="KW-0862">Zinc</keyword>
<accession>P80291</accession>
<comment type="function">
    <text>Metallothioneins have a high content of cysteine residues that bind various heavy metals; these proteins are transcriptionally regulated by both heavy metals and glucocorticoids.</text>
</comment>
<comment type="subunit">
    <text>Monomer.</text>
</comment>
<comment type="domain">
    <text>Class I metallothioneins contain 2 metal-binding domains: four divalent ions are chelated within cluster A of the alpha domain and are coordinated via cysteinyl thiolate bridges to 11 cysteine ligands. Cluster B, the corresponding region within the beta domain, can ligate three divalent ions to 9 cysteines.</text>
</comment>
<comment type="similarity">
    <text evidence="3">Belongs to the metallothionein superfamily. Type 1 family.</text>
</comment>
<feature type="chain" id="PRO_0000197219" description="Metallothionein-2D">
    <location>
        <begin position="1"/>
        <end position="61"/>
    </location>
</feature>
<feature type="region of interest" description="Beta">
    <location>
        <begin position="1"/>
        <end position="29"/>
    </location>
</feature>
<feature type="region of interest" description="Alpha">
    <location>
        <begin position="30"/>
        <end position="61"/>
    </location>
</feature>
<feature type="binding site" evidence="1">
    <location>
        <position position="5"/>
    </location>
    <ligand>
        <name>a divalent metal cation</name>
        <dbReference type="ChEBI" id="CHEBI:60240"/>
        <label>1</label>
        <note>in cluster B</note>
    </ligand>
</feature>
<feature type="binding site" evidence="1">
    <location>
        <position position="7"/>
    </location>
    <ligand>
        <name>a divalent metal cation</name>
        <dbReference type="ChEBI" id="CHEBI:60240"/>
        <label>1</label>
        <note>in cluster B</note>
    </ligand>
</feature>
<feature type="binding site" evidence="1">
    <location>
        <position position="7"/>
    </location>
    <ligand>
        <name>a divalent metal cation</name>
        <dbReference type="ChEBI" id="CHEBI:60240"/>
        <label>2</label>
        <note>in cluster B</note>
    </ligand>
</feature>
<feature type="binding site" evidence="1">
    <location>
        <position position="13"/>
    </location>
    <ligand>
        <name>a divalent metal cation</name>
        <dbReference type="ChEBI" id="CHEBI:60240"/>
        <label>2</label>
        <note>in cluster B</note>
    </ligand>
</feature>
<feature type="binding site" evidence="1">
    <location>
        <position position="15"/>
    </location>
    <ligand>
        <name>a divalent metal cation</name>
        <dbReference type="ChEBI" id="CHEBI:60240"/>
        <label>2</label>
        <note>in cluster B</note>
    </ligand>
</feature>
<feature type="binding site" evidence="1">
    <location>
        <position position="15"/>
    </location>
    <ligand>
        <name>a divalent metal cation</name>
        <dbReference type="ChEBI" id="CHEBI:60240"/>
        <label>3</label>
        <note>in cluster B</note>
    </ligand>
</feature>
<feature type="binding site" evidence="1">
    <location>
        <position position="19"/>
    </location>
    <ligand>
        <name>a divalent metal cation</name>
        <dbReference type="ChEBI" id="CHEBI:60240"/>
        <label>3</label>
        <note>in cluster B</note>
    </ligand>
</feature>
<feature type="binding site" evidence="1">
    <location>
        <position position="21"/>
    </location>
    <ligand>
        <name>a divalent metal cation</name>
        <dbReference type="ChEBI" id="CHEBI:60240"/>
        <label>1</label>
        <note>in cluster B</note>
    </ligand>
</feature>
<feature type="binding site" evidence="1">
    <location>
        <position position="24"/>
    </location>
    <ligand>
        <name>a divalent metal cation</name>
        <dbReference type="ChEBI" id="CHEBI:60240"/>
        <label>1</label>
        <note>in cluster B</note>
    </ligand>
</feature>
<feature type="binding site" evidence="1">
    <location>
        <position position="24"/>
    </location>
    <ligand>
        <name>a divalent metal cation</name>
        <dbReference type="ChEBI" id="CHEBI:60240"/>
        <label>3</label>
        <note>in cluster B</note>
    </ligand>
</feature>
<feature type="binding site" evidence="1">
    <location>
        <position position="26"/>
    </location>
    <ligand>
        <name>a divalent metal cation</name>
        <dbReference type="ChEBI" id="CHEBI:60240"/>
        <label>2</label>
        <note>in cluster B</note>
    </ligand>
</feature>
<feature type="binding site" evidence="1">
    <location>
        <position position="29"/>
    </location>
    <ligand>
        <name>a divalent metal cation</name>
        <dbReference type="ChEBI" id="CHEBI:60240"/>
        <label>3</label>
        <note>in cluster B</note>
    </ligand>
</feature>
<feature type="binding site" evidence="1">
    <location>
        <position position="33"/>
    </location>
    <ligand>
        <name>a divalent metal cation</name>
        <dbReference type="ChEBI" id="CHEBI:60240"/>
        <label>4</label>
        <note>in cluster A</note>
    </ligand>
</feature>
<feature type="binding site" evidence="1">
    <location>
        <position position="34"/>
    </location>
    <ligand>
        <name>a divalent metal cation</name>
        <dbReference type="ChEBI" id="CHEBI:60240"/>
        <label>4</label>
        <note>in cluster A</note>
    </ligand>
</feature>
<feature type="binding site" evidence="1">
    <location>
        <position position="34"/>
    </location>
    <ligand>
        <name>a divalent metal cation</name>
        <dbReference type="ChEBI" id="CHEBI:60240"/>
        <label>5</label>
        <note>in cluster A</note>
    </ligand>
</feature>
<feature type="binding site" evidence="1">
    <location>
        <position position="36"/>
    </location>
    <ligand>
        <name>a divalent metal cation</name>
        <dbReference type="ChEBI" id="CHEBI:60240"/>
        <label>5</label>
        <note>in cluster A</note>
    </ligand>
</feature>
<feature type="binding site" evidence="1">
    <location>
        <position position="37"/>
    </location>
    <ligand>
        <name>a divalent metal cation</name>
        <dbReference type="ChEBI" id="CHEBI:60240"/>
        <label>5</label>
        <note>in cluster A</note>
    </ligand>
</feature>
<feature type="binding site" evidence="1">
    <location>
        <position position="37"/>
    </location>
    <ligand>
        <name>a divalent metal cation</name>
        <dbReference type="ChEBI" id="CHEBI:60240"/>
        <label>6</label>
        <note>in cluster A</note>
    </ligand>
</feature>
<feature type="binding site" evidence="1">
    <location>
        <position position="41"/>
    </location>
    <ligand>
        <name>a divalent metal cation</name>
        <dbReference type="ChEBI" id="CHEBI:60240"/>
        <label>6</label>
        <note>in cluster A</note>
    </ligand>
</feature>
<feature type="binding site" evidence="1">
    <location>
        <position position="44"/>
    </location>
    <ligand>
        <name>a divalent metal cation</name>
        <dbReference type="ChEBI" id="CHEBI:60240"/>
        <label>4</label>
        <note>in cluster A</note>
    </ligand>
</feature>
<feature type="binding site" evidence="1">
    <location>
        <position position="44"/>
    </location>
    <ligand>
        <name>a divalent metal cation</name>
        <dbReference type="ChEBI" id="CHEBI:60240"/>
        <label>6</label>
        <note>in cluster A</note>
    </ligand>
</feature>
<feature type="binding site" evidence="1">
    <location>
        <position position="48"/>
    </location>
    <ligand>
        <name>a divalent metal cation</name>
        <dbReference type="ChEBI" id="CHEBI:60240"/>
        <label>4</label>
        <note>in cluster A</note>
    </ligand>
</feature>
<feature type="binding site" evidence="1">
    <location>
        <position position="50"/>
    </location>
    <ligand>
        <name>a divalent metal cation</name>
        <dbReference type="ChEBI" id="CHEBI:60240"/>
        <label>5</label>
        <note>in cluster A</note>
    </ligand>
</feature>
<feature type="binding site" evidence="1">
    <location>
        <position position="50"/>
    </location>
    <ligand>
        <name>a divalent metal cation</name>
        <dbReference type="ChEBI" id="CHEBI:60240"/>
        <label>7</label>
        <note>in cluster A</note>
    </ligand>
</feature>
<feature type="binding site" evidence="1">
    <location>
        <position position="57"/>
    </location>
    <ligand>
        <name>a divalent metal cation</name>
        <dbReference type="ChEBI" id="CHEBI:60240"/>
        <label>7</label>
        <note>in cluster A</note>
    </ligand>
</feature>
<feature type="binding site" evidence="1">
    <location>
        <position position="59"/>
    </location>
    <ligand>
        <name>a divalent metal cation</name>
        <dbReference type="ChEBI" id="CHEBI:60240"/>
        <label>7</label>
        <note>in cluster A</note>
    </ligand>
</feature>
<feature type="binding site" evidence="1">
    <location>
        <position position="60"/>
    </location>
    <ligand>
        <name>a divalent metal cation</name>
        <dbReference type="ChEBI" id="CHEBI:60240"/>
        <label>6</label>
        <note>in cluster A</note>
    </ligand>
</feature>
<feature type="binding site" evidence="1">
    <location>
        <position position="60"/>
    </location>
    <ligand>
        <name>a divalent metal cation</name>
        <dbReference type="ChEBI" id="CHEBI:60240"/>
        <label>7</label>
        <note>in cluster A</note>
    </ligand>
</feature>
<feature type="modified residue" description="N-acetylmethionine" evidence="2">
    <location>
        <position position="1"/>
    </location>
</feature>
<protein>
    <recommendedName>
        <fullName>Metallothionein-2D</fullName>
        <shortName>MT-2D</shortName>
    </recommendedName>
    <alternativeName>
        <fullName>Metallothionein-IID</fullName>
        <shortName>MT-IID</shortName>
    </alternativeName>
</protein>
<dbReference type="PIR" id="S54332">
    <property type="entry name" value="S54332"/>
</dbReference>
<dbReference type="RefSeq" id="XP_008255539.1">
    <property type="nucleotide sequence ID" value="XM_008257317.2"/>
</dbReference>
<dbReference type="SMR" id="P80291"/>
<dbReference type="FunCoup" id="P80291">
    <property type="interactions" value="29"/>
</dbReference>
<dbReference type="STRING" id="9986.ENSOCUP00000027919"/>
<dbReference type="iPTMnet" id="P80291"/>
<dbReference type="PaxDb" id="9986-ENSOCUP00000025016"/>
<dbReference type="Ensembl" id="ENSOCUT00000022030.1">
    <property type="protein sequence ID" value="ENSOCUP00000025016.1"/>
    <property type="gene ID" value="ENSOCUG00000029235.2"/>
</dbReference>
<dbReference type="Ensembl" id="ENSOCUT00000050577.1">
    <property type="protein sequence ID" value="ENSOCUP00000027919.1"/>
    <property type="gene ID" value="ENSOCUG00000029235.2"/>
</dbReference>
<dbReference type="GeneID" id="100343557"/>
<dbReference type="KEGG" id="ocu:100343557"/>
<dbReference type="eggNOG" id="KOG4738">
    <property type="taxonomic scope" value="Eukaryota"/>
</dbReference>
<dbReference type="GeneTree" id="ENSGT00950000182967"/>
<dbReference type="HOGENOM" id="CLU_171204_2_0_1"/>
<dbReference type="InParanoid" id="P80291"/>
<dbReference type="OMA" id="SEDCSCF"/>
<dbReference type="TreeFam" id="TF336054"/>
<dbReference type="Proteomes" id="UP000001811">
    <property type="component" value="Chromosome 5"/>
</dbReference>
<dbReference type="Bgee" id="ENSOCUG00000029235">
    <property type="expression patterns" value="Expressed in blood and 19 other cell types or tissues"/>
</dbReference>
<dbReference type="ExpressionAtlas" id="P80291">
    <property type="expression patterns" value="baseline"/>
</dbReference>
<dbReference type="GO" id="GO:0005737">
    <property type="term" value="C:cytoplasm"/>
    <property type="evidence" value="ECO:0000250"/>
    <property type="project" value="UniProtKB"/>
</dbReference>
<dbReference type="GO" id="GO:0005634">
    <property type="term" value="C:nucleus"/>
    <property type="evidence" value="ECO:0000250"/>
    <property type="project" value="UniProtKB"/>
</dbReference>
<dbReference type="GO" id="GO:0008270">
    <property type="term" value="F:zinc ion binding"/>
    <property type="evidence" value="ECO:0000250"/>
    <property type="project" value="UniProtKB"/>
</dbReference>
<dbReference type="GO" id="GO:0071276">
    <property type="term" value="P:cellular response to cadmium ion"/>
    <property type="evidence" value="ECO:0007669"/>
    <property type="project" value="TreeGrafter"/>
</dbReference>
<dbReference type="GO" id="GO:0071280">
    <property type="term" value="P:cellular response to copper ion"/>
    <property type="evidence" value="ECO:0007669"/>
    <property type="project" value="TreeGrafter"/>
</dbReference>
<dbReference type="GO" id="GO:0071294">
    <property type="term" value="P:cellular response to zinc ion"/>
    <property type="evidence" value="ECO:0000250"/>
    <property type="project" value="UniProtKB"/>
</dbReference>
<dbReference type="GO" id="GO:0010273">
    <property type="term" value="P:detoxification of copper ion"/>
    <property type="evidence" value="ECO:0007669"/>
    <property type="project" value="TreeGrafter"/>
</dbReference>
<dbReference type="GO" id="GO:0006882">
    <property type="term" value="P:intracellular zinc ion homeostasis"/>
    <property type="evidence" value="ECO:0007669"/>
    <property type="project" value="TreeGrafter"/>
</dbReference>
<dbReference type="GO" id="GO:0045926">
    <property type="term" value="P:negative regulation of growth"/>
    <property type="evidence" value="ECO:0000250"/>
    <property type="project" value="UniProtKB"/>
</dbReference>
<dbReference type="FunFam" id="4.10.10.10:FF:000001">
    <property type="entry name" value="Metallothionein"/>
    <property type="match status" value="1"/>
</dbReference>
<dbReference type="Gene3D" id="4.10.10.10">
    <property type="entry name" value="Metallothionein Isoform II"/>
    <property type="match status" value="1"/>
</dbReference>
<dbReference type="InterPro" id="IPR017854">
    <property type="entry name" value="Metalthion_dom_sf"/>
</dbReference>
<dbReference type="InterPro" id="IPR023587">
    <property type="entry name" value="Metalthion_dom_sf_vert"/>
</dbReference>
<dbReference type="InterPro" id="IPR000006">
    <property type="entry name" value="Metalthion_vert"/>
</dbReference>
<dbReference type="InterPro" id="IPR018064">
    <property type="entry name" value="Metalthion_vert_metal_BS"/>
</dbReference>
<dbReference type="PANTHER" id="PTHR23299">
    <property type="entry name" value="METALLOTHIONEIN"/>
    <property type="match status" value="1"/>
</dbReference>
<dbReference type="PANTHER" id="PTHR23299:SF38">
    <property type="entry name" value="METALLOTHIONEIN-2B"/>
    <property type="match status" value="1"/>
</dbReference>
<dbReference type="Pfam" id="PF00131">
    <property type="entry name" value="Metallothio"/>
    <property type="match status" value="1"/>
</dbReference>
<dbReference type="PRINTS" id="PR00860">
    <property type="entry name" value="MTVERTEBRATE"/>
</dbReference>
<dbReference type="SUPFAM" id="SSF57868">
    <property type="entry name" value="Metallothionein"/>
    <property type="match status" value="1"/>
</dbReference>
<dbReference type="PROSITE" id="PS00203">
    <property type="entry name" value="METALLOTHIONEIN_VRT"/>
    <property type="match status" value="1"/>
</dbReference>
<name>MT2D_RABIT</name>
<reference key="1">
    <citation type="journal article" date="1995" name="Biochem. J.">
        <title>Primary structures of seven metallothioneins from rabbit tissue.</title>
        <authorList>
            <person name="Hunziker P.E."/>
            <person name="Kaur P."/>
            <person name="Wan M."/>
            <person name="Kaenzig A."/>
        </authorList>
    </citation>
    <scope>PROTEIN SEQUENCE</scope>
    <scope>ACETYLATION AT MET-1</scope>
    <source>
        <strain>New Zealand white</strain>
        <tissue>Kidney</tissue>
        <tissue>Liver</tissue>
    </source>
</reference>
<evidence type="ECO:0000250" key="1">
    <source>
        <dbReference type="UniProtKB" id="P02795"/>
    </source>
</evidence>
<evidence type="ECO:0000269" key="2">
    <source>
    </source>
</evidence>
<evidence type="ECO:0000305" key="3"/>
<proteinExistence type="evidence at protein level"/>